<comment type="function">
    <text>Acetylation of prosthetic group (2-(5''-phosphoribosyl)-3'-dephosphocoenzyme-A) of the gamma subunit of citrate lyase.</text>
</comment>
<comment type="catalytic activity">
    <reaction>
        <text>holo-[citrate lyase ACP] + acetate + ATP = acetyl-[citrate lyase ACP] + AMP + diphosphate</text>
        <dbReference type="Rhea" id="RHEA:23788"/>
        <dbReference type="Rhea" id="RHEA-COMP:10158"/>
        <dbReference type="Rhea" id="RHEA-COMP:13710"/>
        <dbReference type="ChEBI" id="CHEBI:30089"/>
        <dbReference type="ChEBI" id="CHEBI:30616"/>
        <dbReference type="ChEBI" id="CHEBI:33019"/>
        <dbReference type="ChEBI" id="CHEBI:82683"/>
        <dbReference type="ChEBI" id="CHEBI:137976"/>
        <dbReference type="ChEBI" id="CHEBI:456215"/>
        <dbReference type="EC" id="6.2.1.22"/>
    </reaction>
</comment>
<comment type="interaction">
    <interactant intactId="EBI-1119239">
        <id>P77390</id>
    </interactant>
    <interactant intactId="EBI-1116378">
        <id>P0A8D3</id>
        <label>yaiI</label>
    </interactant>
    <organismsDiffer>false</organismsDiffer>
    <experiments>2</experiments>
</comment>
<comment type="induction">
    <text evidence="2">Repressed by H-NS. Part of the citCDEFXG operon.</text>
</comment>
<comment type="sequence caution" evidence="3">
    <conflict type="erroneous initiation">
        <sequence resource="EMBL-CDS" id="AAB40818"/>
    </conflict>
    <text>Extended N-terminus.</text>
</comment>
<proteinExistence type="evidence at protein level"/>
<feature type="chain" id="PRO_0000089770" description="[Citrate [pro-3S]-lyase] ligase">
    <location>
        <begin position="1"/>
        <end position="352"/>
    </location>
</feature>
<feature type="domain" description="N-acetyltransferase" evidence="1">
    <location>
        <begin position="1"/>
        <end position="128"/>
    </location>
</feature>
<name>CITC_ECOLI</name>
<accession>P77390</accession>
<accession>O54337</accession>
<accession>Q9R2T4</accession>
<sequence length="352" mass="40077">MFGNDIFTRVKRSENKKMAEIAQFLHENDLSVDTTVEVFITVTRDEKLIACGGIAGNIIKCVAISESVRGEGLALTLATELINLAYERHSTHLFIYTKTEYEALFRQCGFSTLTSVPGVMVLMENSATRLKRYAESLKKFRHPGNKIGCIVMNANPFTNGHRYLIQQAAAQCDWLHLFLVKEDSSRFPYEDRLDLVLKGTADIPRLTVHRGSEYIISRATFPCYFIKEQSVINHCYTEIDLKIFRQYLAPALGVTHRFVGTEPFCRVTAQYNQDMRYWLETPTISAPPIELVEIERLRYQEMPISASRVRQLLAKNDLTAIAPLVPAVTLHYLQNLLEHSRQDAAARQKTPA</sequence>
<keyword id="KW-0067">ATP-binding</keyword>
<keyword id="KW-0436">Ligase</keyword>
<keyword id="KW-0547">Nucleotide-binding</keyword>
<keyword id="KW-1185">Reference proteome</keyword>
<gene>
    <name type="primary">citC</name>
    <name type="synonym">ybeO</name>
    <name type="ordered locus">b0618</name>
    <name type="ordered locus">JW0610</name>
</gene>
<dbReference type="EC" id="6.2.1.22"/>
<dbReference type="EMBL" id="U82598">
    <property type="protein sequence ID" value="AAB40818.1"/>
    <property type="status" value="ALT_INIT"/>
    <property type="molecule type" value="Genomic_DNA"/>
</dbReference>
<dbReference type="EMBL" id="U00096">
    <property type="protein sequence ID" value="AAC73719.2"/>
    <property type="molecule type" value="Genomic_DNA"/>
</dbReference>
<dbReference type="EMBL" id="AP009048">
    <property type="protein sequence ID" value="BAA35254.2"/>
    <property type="molecule type" value="Genomic_DNA"/>
</dbReference>
<dbReference type="EMBL" id="U46667">
    <property type="protein sequence ID" value="AAC28950.1"/>
    <property type="molecule type" value="Genomic_DNA"/>
</dbReference>
<dbReference type="PIR" id="H64795">
    <property type="entry name" value="H64795"/>
</dbReference>
<dbReference type="RefSeq" id="NP_415151.4">
    <property type="nucleotide sequence ID" value="NC_000913.3"/>
</dbReference>
<dbReference type="RefSeq" id="WP_000467705.1">
    <property type="nucleotide sequence ID" value="NZ_STEB01000031.1"/>
</dbReference>
<dbReference type="BioGRID" id="4259904">
    <property type="interactions" value="20"/>
</dbReference>
<dbReference type="BioGRID" id="849616">
    <property type="interactions" value="3"/>
</dbReference>
<dbReference type="FunCoup" id="P77390">
    <property type="interactions" value="208"/>
</dbReference>
<dbReference type="IntAct" id="P77390">
    <property type="interactions" value="9"/>
</dbReference>
<dbReference type="STRING" id="511145.b0618"/>
<dbReference type="PaxDb" id="511145-b0618"/>
<dbReference type="EnsemblBacteria" id="AAC73719">
    <property type="protein sequence ID" value="AAC73719"/>
    <property type="gene ID" value="b0618"/>
</dbReference>
<dbReference type="GeneID" id="75205020"/>
<dbReference type="GeneID" id="945231"/>
<dbReference type="KEGG" id="ecj:JW0610"/>
<dbReference type="KEGG" id="eco:b0618"/>
<dbReference type="KEGG" id="ecoc:C3026_03090"/>
<dbReference type="PATRIC" id="fig|1411691.4.peg.1650"/>
<dbReference type="EchoBASE" id="EB3409"/>
<dbReference type="eggNOG" id="COG3053">
    <property type="taxonomic scope" value="Bacteria"/>
</dbReference>
<dbReference type="HOGENOM" id="CLU_063190_0_0_6"/>
<dbReference type="InParanoid" id="P77390"/>
<dbReference type="OMA" id="LAYERHH"/>
<dbReference type="OrthoDB" id="9779753at2"/>
<dbReference type="PhylomeDB" id="P77390"/>
<dbReference type="BioCyc" id="EcoCyc:CITC-MONOMER"/>
<dbReference type="PRO" id="PR:P77390"/>
<dbReference type="Proteomes" id="UP000000625">
    <property type="component" value="Chromosome"/>
</dbReference>
<dbReference type="GO" id="GO:0008771">
    <property type="term" value="F:[citrate (pro-3S)-lyase] ligase activity"/>
    <property type="evidence" value="ECO:0000314"/>
    <property type="project" value="EcoCyc"/>
</dbReference>
<dbReference type="GO" id="GO:0016747">
    <property type="term" value="F:acyltransferase activity, transferring groups other than amino-acyl groups"/>
    <property type="evidence" value="ECO:0007669"/>
    <property type="project" value="InterPro"/>
</dbReference>
<dbReference type="GO" id="GO:0005524">
    <property type="term" value="F:ATP binding"/>
    <property type="evidence" value="ECO:0007669"/>
    <property type="project" value="UniProtKB-KW"/>
</dbReference>
<dbReference type="GO" id="GO:0009058">
    <property type="term" value="P:biosynthetic process"/>
    <property type="evidence" value="ECO:0007669"/>
    <property type="project" value="InterPro"/>
</dbReference>
<dbReference type="CDD" id="cd02169">
    <property type="entry name" value="Citrate_lyase_ligase"/>
    <property type="match status" value="1"/>
</dbReference>
<dbReference type="FunFam" id="3.40.50.620:FF:000071">
    <property type="entry name" value="[Citrate [pro-3S]-lyase] ligase"/>
    <property type="match status" value="1"/>
</dbReference>
<dbReference type="FunFam" id="3.40.630.30:FF:000024">
    <property type="entry name" value="[Citrate [pro-3S]-lyase] ligase"/>
    <property type="match status" value="1"/>
</dbReference>
<dbReference type="Gene3D" id="3.40.630.30">
    <property type="match status" value="1"/>
</dbReference>
<dbReference type="Gene3D" id="3.40.50.620">
    <property type="entry name" value="HUPs"/>
    <property type="match status" value="1"/>
</dbReference>
<dbReference type="InterPro" id="IPR016181">
    <property type="entry name" value="Acyl_CoA_acyltransferase"/>
</dbReference>
<dbReference type="InterPro" id="IPR005216">
    <property type="entry name" value="Citrate_lyase_ligase"/>
</dbReference>
<dbReference type="InterPro" id="IPR013166">
    <property type="entry name" value="Citrate_lyase_ligase_C"/>
</dbReference>
<dbReference type="InterPro" id="IPR004821">
    <property type="entry name" value="Cyt_trans-like"/>
</dbReference>
<dbReference type="InterPro" id="IPR000182">
    <property type="entry name" value="GNAT_dom"/>
</dbReference>
<dbReference type="InterPro" id="IPR014729">
    <property type="entry name" value="Rossmann-like_a/b/a_fold"/>
</dbReference>
<dbReference type="NCBIfam" id="TIGR00124">
    <property type="entry name" value="cit_ly_ligase"/>
    <property type="match status" value="1"/>
</dbReference>
<dbReference type="NCBIfam" id="TIGR00125">
    <property type="entry name" value="cyt_tran_rel"/>
    <property type="match status" value="1"/>
</dbReference>
<dbReference type="PANTHER" id="PTHR40599">
    <property type="entry name" value="[CITRATE [PRO-3S]-LYASE] LIGASE"/>
    <property type="match status" value="1"/>
</dbReference>
<dbReference type="PANTHER" id="PTHR40599:SF2">
    <property type="entry name" value="[CITRATE [PRO-3S]-LYASE] LIGASE"/>
    <property type="match status" value="1"/>
</dbReference>
<dbReference type="Pfam" id="PF08218">
    <property type="entry name" value="Citrate_ly_lig"/>
    <property type="match status" value="1"/>
</dbReference>
<dbReference type="PIRSF" id="PIRSF005751">
    <property type="entry name" value="Acet_citr_lig"/>
    <property type="match status" value="1"/>
</dbReference>
<dbReference type="SMART" id="SM00764">
    <property type="entry name" value="Citrate_ly_lig"/>
    <property type="match status" value="1"/>
</dbReference>
<dbReference type="SUPFAM" id="SSF55729">
    <property type="entry name" value="Acyl-CoA N-acyltransferases (Nat)"/>
    <property type="match status" value="1"/>
</dbReference>
<dbReference type="SUPFAM" id="SSF52374">
    <property type="entry name" value="Nucleotidylyl transferase"/>
    <property type="match status" value="1"/>
</dbReference>
<dbReference type="PROSITE" id="PS51186">
    <property type="entry name" value="GNAT"/>
    <property type="match status" value="1"/>
</dbReference>
<protein>
    <recommendedName>
        <fullName>[Citrate [pro-3S]-lyase] ligase</fullName>
        <ecNumber>6.2.1.22</ecNumber>
    </recommendedName>
    <alternativeName>
        <fullName>Acetate:SH-citrate lyase ligase</fullName>
    </alternativeName>
    <alternativeName>
        <fullName>Citrate lyase synthetase</fullName>
    </alternativeName>
</protein>
<evidence type="ECO:0000255" key="1">
    <source>
        <dbReference type="PROSITE-ProRule" id="PRU00532"/>
    </source>
</evidence>
<evidence type="ECO:0000269" key="2">
    <source>
    </source>
</evidence>
<evidence type="ECO:0000305" key="3"/>
<organism>
    <name type="scientific">Escherichia coli (strain K12)</name>
    <dbReference type="NCBI Taxonomy" id="83333"/>
    <lineage>
        <taxon>Bacteria</taxon>
        <taxon>Pseudomonadati</taxon>
        <taxon>Pseudomonadota</taxon>
        <taxon>Gammaproteobacteria</taxon>
        <taxon>Enterobacterales</taxon>
        <taxon>Enterobacteriaceae</taxon>
        <taxon>Escherichia</taxon>
    </lineage>
</organism>
<reference key="1">
    <citation type="journal article" date="1996" name="DNA Res.">
        <title>A 718-kb DNA sequence of the Escherichia coli K-12 genome corresponding to the 12.7-28.0 min region on the linkage map.</title>
        <authorList>
            <person name="Oshima T."/>
            <person name="Aiba H."/>
            <person name="Baba T."/>
            <person name="Fujita K."/>
            <person name="Hayashi K."/>
            <person name="Honjo A."/>
            <person name="Ikemoto K."/>
            <person name="Inada T."/>
            <person name="Itoh T."/>
            <person name="Kajihara M."/>
            <person name="Kanai K."/>
            <person name="Kashimoto K."/>
            <person name="Kimura S."/>
            <person name="Kitagawa M."/>
            <person name="Makino K."/>
            <person name="Masuda S."/>
            <person name="Miki T."/>
            <person name="Mizobuchi K."/>
            <person name="Mori H."/>
            <person name="Motomura K."/>
            <person name="Nakamura Y."/>
            <person name="Nashimoto H."/>
            <person name="Nishio Y."/>
            <person name="Saito N."/>
            <person name="Sampei G."/>
            <person name="Seki Y."/>
            <person name="Tagami H."/>
            <person name="Takemoto K."/>
            <person name="Wada C."/>
            <person name="Yamamoto Y."/>
            <person name="Yano M."/>
            <person name="Horiuchi T."/>
        </authorList>
    </citation>
    <scope>NUCLEOTIDE SEQUENCE [LARGE SCALE GENOMIC DNA]</scope>
    <source>
        <strain>K12 / W3110 / ATCC 27325 / DSM 5911</strain>
    </source>
</reference>
<reference key="2">
    <citation type="submission" date="1997-01" db="EMBL/GenBank/DDBJ databases">
        <title>Sequence of minutes 4-25 of Escherichia coli.</title>
        <authorList>
            <person name="Chung E."/>
            <person name="Allen E."/>
            <person name="Araujo R."/>
            <person name="Aparicio A.M."/>
            <person name="Davis K."/>
            <person name="Duncan M."/>
            <person name="Federspiel N."/>
            <person name="Hyman R."/>
            <person name="Kalman S."/>
            <person name="Komp C."/>
            <person name="Kurdi O."/>
            <person name="Lew H."/>
            <person name="Lin D."/>
            <person name="Namath A."/>
            <person name="Oefner P."/>
            <person name="Roberts D."/>
            <person name="Schramm S."/>
            <person name="Davis R.W."/>
        </authorList>
    </citation>
    <scope>NUCLEOTIDE SEQUENCE [LARGE SCALE GENOMIC DNA]</scope>
    <source>
        <strain>K12 / MG1655 / ATCC 47076</strain>
    </source>
</reference>
<reference key="3">
    <citation type="journal article" date="1997" name="Science">
        <title>The complete genome sequence of Escherichia coli K-12.</title>
        <authorList>
            <person name="Blattner F.R."/>
            <person name="Plunkett G. III"/>
            <person name="Bloch C.A."/>
            <person name="Perna N.T."/>
            <person name="Burland V."/>
            <person name="Riley M."/>
            <person name="Collado-Vides J."/>
            <person name="Glasner J.D."/>
            <person name="Rode C.K."/>
            <person name="Mayhew G.F."/>
            <person name="Gregor J."/>
            <person name="Davis N.W."/>
            <person name="Kirkpatrick H.A."/>
            <person name="Goeden M.A."/>
            <person name="Rose D.J."/>
            <person name="Mau B."/>
            <person name="Shao Y."/>
        </authorList>
    </citation>
    <scope>NUCLEOTIDE SEQUENCE [LARGE SCALE GENOMIC DNA]</scope>
    <source>
        <strain>K12 / MG1655 / ATCC 47076</strain>
    </source>
</reference>
<reference key="4">
    <citation type="journal article" date="2006" name="Mol. Syst. Biol.">
        <title>Highly accurate genome sequences of Escherichia coli K-12 strains MG1655 and W3110.</title>
        <authorList>
            <person name="Hayashi K."/>
            <person name="Morooka N."/>
            <person name="Yamamoto Y."/>
            <person name="Fujita K."/>
            <person name="Isono K."/>
            <person name="Choi S."/>
            <person name="Ohtsubo E."/>
            <person name="Baba T."/>
            <person name="Wanner B.L."/>
            <person name="Mori H."/>
            <person name="Horiuchi T."/>
        </authorList>
    </citation>
    <scope>NUCLEOTIDE SEQUENCE [LARGE SCALE GENOMIC DNA]</scope>
    <source>
        <strain>K12 / W3110 / ATCC 27325 / DSM 5911</strain>
    </source>
</reference>
<reference key="5">
    <citation type="submission" date="1998-06" db="EMBL/GenBank/DDBJ databases">
        <authorList>
            <person name="Ingmer H."/>
            <person name="Cohen S.N."/>
        </authorList>
    </citation>
    <scope>NUCLEOTIDE SEQUENCE [GENOMIC DNA]</scope>
    <source>
        <strain>K12 / MG1655 / ATCC 47076</strain>
    </source>
</reference>
<reference key="6">
    <citation type="journal article" date="2009" name="J. Bacteriol.">
        <title>Involvement of the leucine response transcription factor LeuO in regulation of the genes for sulfa drug efflux.</title>
        <authorList>
            <person name="Shimada T."/>
            <person name="Yamamoto K."/>
            <person name="Ishihama A."/>
        </authorList>
    </citation>
    <scope>OPERON STRUCTURE</scope>
    <scope>INDUCTION</scope>
    <source>
        <strain>K12 / BW25113</strain>
    </source>
</reference>